<feature type="initiator methionine" description="Removed" evidence="1">
    <location>
        <position position="1"/>
    </location>
</feature>
<feature type="chain" id="PRO_0000104354" description="Large ribosomal subunit protein uL11">
    <location>
        <begin position="2"/>
        <end position="142"/>
    </location>
</feature>
<feature type="modified residue" description="N,N,N-trimethylalanine" evidence="1">
    <location>
        <position position="2"/>
    </location>
</feature>
<feature type="modified residue" description="N6,N6,N6-trimethyllysine" evidence="1">
    <location>
        <position position="4"/>
    </location>
</feature>
<feature type="modified residue" description="N6,N6,N6-trimethyllysine" evidence="1">
    <location>
        <position position="40"/>
    </location>
</feature>
<protein>
    <recommendedName>
        <fullName evidence="2">Large ribosomal subunit protein uL11</fullName>
    </recommendedName>
    <alternativeName>
        <fullName evidence="3">50S ribosomal protein L11</fullName>
    </alternativeName>
</protein>
<comment type="function">
    <text evidence="2">Forms part of the ribosomal stalk which helps the ribosome interact with GTP-bound translation factors.</text>
</comment>
<comment type="subunit">
    <text evidence="2">Part of the ribosomal stalk of the 50S ribosomal subunit. Interacts with L10 and the large rRNA to form the base of the stalk. L10 forms an elongated spine to which L12 dimers bind in a sequential fashion forming a multimeric L10(L12)X complex.</text>
</comment>
<comment type="PTM">
    <text evidence="2">One or more lysine residues are methylated.</text>
</comment>
<comment type="similarity">
    <text evidence="2">Belongs to the universal ribosomal protein uL11 family.</text>
</comment>
<gene>
    <name evidence="2" type="primary">rplK</name>
    <name type="ordered locus">STY3736</name>
    <name type="ordered locus">t3478</name>
</gene>
<proteinExistence type="inferred from homology"/>
<keyword id="KW-0488">Methylation</keyword>
<keyword id="KW-0687">Ribonucleoprotein</keyword>
<keyword id="KW-0689">Ribosomal protein</keyword>
<keyword id="KW-0694">RNA-binding</keyword>
<keyword id="KW-0699">rRNA-binding</keyword>
<dbReference type="EMBL" id="AL513382">
    <property type="protein sequence ID" value="CAD09491.1"/>
    <property type="molecule type" value="Genomic_DNA"/>
</dbReference>
<dbReference type="EMBL" id="AE014613">
    <property type="protein sequence ID" value="AAO70994.1"/>
    <property type="molecule type" value="Genomic_DNA"/>
</dbReference>
<dbReference type="RefSeq" id="NP_457921.1">
    <property type="nucleotide sequence ID" value="NC_003198.1"/>
</dbReference>
<dbReference type="RefSeq" id="WP_001085926.1">
    <property type="nucleotide sequence ID" value="NZ_WSUR01000043.1"/>
</dbReference>
<dbReference type="SMR" id="P0A7K1"/>
<dbReference type="STRING" id="220341.gene:17587592"/>
<dbReference type="GeneID" id="93777911"/>
<dbReference type="KEGG" id="stt:t3478"/>
<dbReference type="KEGG" id="sty:STY3736"/>
<dbReference type="PATRIC" id="fig|220341.7.peg.3809"/>
<dbReference type="eggNOG" id="COG0080">
    <property type="taxonomic scope" value="Bacteria"/>
</dbReference>
<dbReference type="HOGENOM" id="CLU_074237_2_0_6"/>
<dbReference type="OMA" id="CKQFNAK"/>
<dbReference type="OrthoDB" id="9802408at2"/>
<dbReference type="Proteomes" id="UP000000541">
    <property type="component" value="Chromosome"/>
</dbReference>
<dbReference type="Proteomes" id="UP000002670">
    <property type="component" value="Chromosome"/>
</dbReference>
<dbReference type="GO" id="GO:0022625">
    <property type="term" value="C:cytosolic large ribosomal subunit"/>
    <property type="evidence" value="ECO:0007669"/>
    <property type="project" value="TreeGrafter"/>
</dbReference>
<dbReference type="GO" id="GO:0070180">
    <property type="term" value="F:large ribosomal subunit rRNA binding"/>
    <property type="evidence" value="ECO:0007669"/>
    <property type="project" value="UniProtKB-UniRule"/>
</dbReference>
<dbReference type="GO" id="GO:0003735">
    <property type="term" value="F:structural constituent of ribosome"/>
    <property type="evidence" value="ECO:0007669"/>
    <property type="project" value="InterPro"/>
</dbReference>
<dbReference type="GO" id="GO:0006412">
    <property type="term" value="P:translation"/>
    <property type="evidence" value="ECO:0007669"/>
    <property type="project" value="UniProtKB-UniRule"/>
</dbReference>
<dbReference type="CDD" id="cd00349">
    <property type="entry name" value="Ribosomal_L11"/>
    <property type="match status" value="1"/>
</dbReference>
<dbReference type="FunFam" id="1.10.10.250:FF:000001">
    <property type="entry name" value="50S ribosomal protein L11"/>
    <property type="match status" value="1"/>
</dbReference>
<dbReference type="FunFam" id="3.30.1550.10:FF:000001">
    <property type="entry name" value="50S ribosomal protein L11"/>
    <property type="match status" value="1"/>
</dbReference>
<dbReference type="Gene3D" id="1.10.10.250">
    <property type="entry name" value="Ribosomal protein L11, C-terminal domain"/>
    <property type="match status" value="1"/>
</dbReference>
<dbReference type="Gene3D" id="3.30.1550.10">
    <property type="entry name" value="Ribosomal protein L11/L12, N-terminal domain"/>
    <property type="match status" value="1"/>
</dbReference>
<dbReference type="HAMAP" id="MF_00736">
    <property type="entry name" value="Ribosomal_uL11"/>
    <property type="match status" value="1"/>
</dbReference>
<dbReference type="InterPro" id="IPR000911">
    <property type="entry name" value="Ribosomal_uL11"/>
</dbReference>
<dbReference type="InterPro" id="IPR006519">
    <property type="entry name" value="Ribosomal_uL11_bac-typ"/>
</dbReference>
<dbReference type="InterPro" id="IPR020783">
    <property type="entry name" value="Ribosomal_uL11_C"/>
</dbReference>
<dbReference type="InterPro" id="IPR036769">
    <property type="entry name" value="Ribosomal_uL11_C_sf"/>
</dbReference>
<dbReference type="InterPro" id="IPR020785">
    <property type="entry name" value="Ribosomal_uL11_CS"/>
</dbReference>
<dbReference type="InterPro" id="IPR020784">
    <property type="entry name" value="Ribosomal_uL11_N"/>
</dbReference>
<dbReference type="InterPro" id="IPR036796">
    <property type="entry name" value="Ribosomal_uL11_N_sf"/>
</dbReference>
<dbReference type="NCBIfam" id="TIGR01632">
    <property type="entry name" value="L11_bact"/>
    <property type="match status" value="1"/>
</dbReference>
<dbReference type="PANTHER" id="PTHR11661">
    <property type="entry name" value="60S RIBOSOMAL PROTEIN L12"/>
    <property type="match status" value="1"/>
</dbReference>
<dbReference type="PANTHER" id="PTHR11661:SF1">
    <property type="entry name" value="LARGE RIBOSOMAL SUBUNIT PROTEIN UL11M"/>
    <property type="match status" value="1"/>
</dbReference>
<dbReference type="Pfam" id="PF00298">
    <property type="entry name" value="Ribosomal_L11"/>
    <property type="match status" value="1"/>
</dbReference>
<dbReference type="Pfam" id="PF03946">
    <property type="entry name" value="Ribosomal_L11_N"/>
    <property type="match status" value="1"/>
</dbReference>
<dbReference type="SMART" id="SM00649">
    <property type="entry name" value="RL11"/>
    <property type="match status" value="1"/>
</dbReference>
<dbReference type="SUPFAM" id="SSF54747">
    <property type="entry name" value="Ribosomal L11/L12e N-terminal domain"/>
    <property type="match status" value="1"/>
</dbReference>
<dbReference type="SUPFAM" id="SSF46906">
    <property type="entry name" value="Ribosomal protein L11, C-terminal domain"/>
    <property type="match status" value="1"/>
</dbReference>
<dbReference type="PROSITE" id="PS00359">
    <property type="entry name" value="RIBOSOMAL_L11"/>
    <property type="match status" value="1"/>
</dbReference>
<sequence>MAKKVQAYVKLQVAAGMANPSPPVGPALGQQGVNIMEFCKAFNAKTDSIEKGLPIPVVITVYADRSFTFVTKTPPAAVLLKKAAGIKSGSGKPNKDKVGKISRAQLQEIAQTKAADMTGADIEAMTRSIEGTARSMGLVVED</sequence>
<reference key="1">
    <citation type="journal article" date="2001" name="Nature">
        <title>Complete genome sequence of a multiple drug resistant Salmonella enterica serovar Typhi CT18.</title>
        <authorList>
            <person name="Parkhill J."/>
            <person name="Dougan G."/>
            <person name="James K.D."/>
            <person name="Thomson N.R."/>
            <person name="Pickard D."/>
            <person name="Wain J."/>
            <person name="Churcher C.M."/>
            <person name="Mungall K.L."/>
            <person name="Bentley S.D."/>
            <person name="Holden M.T.G."/>
            <person name="Sebaihia M."/>
            <person name="Baker S."/>
            <person name="Basham D."/>
            <person name="Brooks K."/>
            <person name="Chillingworth T."/>
            <person name="Connerton P."/>
            <person name="Cronin A."/>
            <person name="Davis P."/>
            <person name="Davies R.M."/>
            <person name="Dowd L."/>
            <person name="White N."/>
            <person name="Farrar J."/>
            <person name="Feltwell T."/>
            <person name="Hamlin N."/>
            <person name="Haque A."/>
            <person name="Hien T.T."/>
            <person name="Holroyd S."/>
            <person name="Jagels K."/>
            <person name="Krogh A."/>
            <person name="Larsen T.S."/>
            <person name="Leather S."/>
            <person name="Moule S."/>
            <person name="O'Gaora P."/>
            <person name="Parry C."/>
            <person name="Quail M.A."/>
            <person name="Rutherford K.M."/>
            <person name="Simmonds M."/>
            <person name="Skelton J."/>
            <person name="Stevens K."/>
            <person name="Whitehead S."/>
            <person name="Barrell B.G."/>
        </authorList>
    </citation>
    <scope>NUCLEOTIDE SEQUENCE [LARGE SCALE GENOMIC DNA]</scope>
    <source>
        <strain>CT18</strain>
    </source>
</reference>
<reference key="2">
    <citation type="journal article" date="2003" name="J. Bacteriol.">
        <title>Comparative genomics of Salmonella enterica serovar Typhi strains Ty2 and CT18.</title>
        <authorList>
            <person name="Deng W."/>
            <person name="Liou S.-R."/>
            <person name="Plunkett G. III"/>
            <person name="Mayhew G.F."/>
            <person name="Rose D.J."/>
            <person name="Burland V."/>
            <person name="Kodoyianni V."/>
            <person name="Schwartz D.C."/>
            <person name="Blattner F.R."/>
        </authorList>
    </citation>
    <scope>NUCLEOTIDE SEQUENCE [LARGE SCALE GENOMIC DNA]</scope>
    <source>
        <strain>ATCC 700931 / Ty2</strain>
    </source>
</reference>
<evidence type="ECO:0000250" key="1"/>
<evidence type="ECO:0000255" key="2">
    <source>
        <dbReference type="HAMAP-Rule" id="MF_00736"/>
    </source>
</evidence>
<evidence type="ECO:0000305" key="3"/>
<organism>
    <name type="scientific">Salmonella typhi</name>
    <dbReference type="NCBI Taxonomy" id="90370"/>
    <lineage>
        <taxon>Bacteria</taxon>
        <taxon>Pseudomonadati</taxon>
        <taxon>Pseudomonadota</taxon>
        <taxon>Gammaproteobacteria</taxon>
        <taxon>Enterobacterales</taxon>
        <taxon>Enterobacteriaceae</taxon>
        <taxon>Salmonella</taxon>
    </lineage>
</organism>
<name>RL11_SALTI</name>
<accession>P0A7K1</accession>
<accession>P02409</accession>
<accession>P76778</accession>